<organism>
    <name type="scientific">Bacillus subtilis (strain 168)</name>
    <dbReference type="NCBI Taxonomy" id="224308"/>
    <lineage>
        <taxon>Bacteria</taxon>
        <taxon>Bacillati</taxon>
        <taxon>Bacillota</taxon>
        <taxon>Bacilli</taxon>
        <taxon>Bacillales</taxon>
        <taxon>Bacillaceae</taxon>
        <taxon>Bacillus</taxon>
    </lineage>
</organism>
<keyword id="KW-0067">ATP-binding</keyword>
<keyword id="KW-1003">Cell membrane</keyword>
<keyword id="KW-0418">Kinase</keyword>
<keyword id="KW-0472">Membrane</keyword>
<keyword id="KW-0547">Nucleotide-binding</keyword>
<keyword id="KW-0597">Phosphoprotein</keyword>
<keyword id="KW-1185">Reference proteome</keyword>
<keyword id="KW-0808">Transferase</keyword>
<keyword id="KW-0812">Transmembrane</keyword>
<keyword id="KW-1133">Transmembrane helix</keyword>
<keyword id="KW-0902">Two-component regulatory system</keyword>
<comment type="function">
    <text evidence="4">Member of the two-component regulatory system LiaS/LiaR probably involved in response to a subset of cell wall-active antibiotics that interfere with the lipid II cycle in the cytoplasmic membrane (bacitracin, nisin, ramoplanin and vancomycin). Also seems to be involved in response to cationic antimicrobial peptides and secretion stress. Activates probably LiaR by phosphorylation.</text>
</comment>
<comment type="catalytic activity">
    <reaction>
        <text>ATP + protein L-histidine = ADP + protein N-phospho-L-histidine.</text>
        <dbReference type="EC" id="2.7.13.3"/>
    </reaction>
</comment>
<comment type="subcellular location">
    <subcellularLocation>
        <location evidence="9">Cell membrane</location>
        <topology evidence="9">Multi-pass membrane protein</topology>
    </subcellularLocation>
</comment>
<comment type="induction">
    <text evidence="5 6 7 8">Induced, via LiaR, by antibiotics (vancomycin, bacitracin, nisin and ramoplanin), cationic antimicrobial peptides (human LL-37 and porcine PG-1), Triton X-100 and severe secretion stress.</text>
</comment>
<name>LIAS_BACSU</name>
<proteinExistence type="evidence at transcript level"/>
<dbReference type="EC" id="2.7.13.3"/>
<dbReference type="EMBL" id="AJ223978">
    <property type="protein sequence ID" value="CAA11744.1"/>
    <property type="molecule type" value="Genomic_DNA"/>
</dbReference>
<dbReference type="EMBL" id="AL009126">
    <property type="protein sequence ID" value="CAB15299.1"/>
    <property type="molecule type" value="Genomic_DNA"/>
</dbReference>
<dbReference type="PIR" id="F70045">
    <property type="entry name" value="F70045"/>
</dbReference>
<dbReference type="RefSeq" id="NP_391189.1">
    <property type="nucleotide sequence ID" value="NC_000964.3"/>
</dbReference>
<dbReference type="RefSeq" id="WP_003244464.1">
    <property type="nucleotide sequence ID" value="NZ_OZ025638.1"/>
</dbReference>
<dbReference type="SMR" id="O32198"/>
<dbReference type="FunCoup" id="O32198">
    <property type="interactions" value="151"/>
</dbReference>
<dbReference type="IntAct" id="O32198">
    <property type="interactions" value="4"/>
</dbReference>
<dbReference type="STRING" id="224308.BSU33090"/>
<dbReference type="PaxDb" id="224308-BSU33090"/>
<dbReference type="DNASU" id="935967"/>
<dbReference type="EnsemblBacteria" id="CAB15299">
    <property type="protein sequence ID" value="CAB15299"/>
    <property type="gene ID" value="BSU_33090"/>
</dbReference>
<dbReference type="GeneID" id="935967"/>
<dbReference type="KEGG" id="bsu:BSU33090"/>
<dbReference type="PATRIC" id="fig|224308.179.peg.3587"/>
<dbReference type="eggNOG" id="COG4585">
    <property type="taxonomic scope" value="Bacteria"/>
</dbReference>
<dbReference type="InParanoid" id="O32198"/>
<dbReference type="OrthoDB" id="9795828at2"/>
<dbReference type="PhylomeDB" id="O32198"/>
<dbReference type="BioCyc" id="BSUB:BSU33090-MONOMER"/>
<dbReference type="Proteomes" id="UP000001570">
    <property type="component" value="Chromosome"/>
</dbReference>
<dbReference type="GO" id="GO:0005886">
    <property type="term" value="C:plasma membrane"/>
    <property type="evidence" value="ECO:0000318"/>
    <property type="project" value="GO_Central"/>
</dbReference>
<dbReference type="GO" id="GO:0005524">
    <property type="term" value="F:ATP binding"/>
    <property type="evidence" value="ECO:0007669"/>
    <property type="project" value="UniProtKB-KW"/>
</dbReference>
<dbReference type="GO" id="GO:0000155">
    <property type="term" value="F:phosphorelay sensor kinase activity"/>
    <property type="evidence" value="ECO:0007669"/>
    <property type="project" value="InterPro"/>
</dbReference>
<dbReference type="GO" id="GO:0046983">
    <property type="term" value="F:protein dimerization activity"/>
    <property type="evidence" value="ECO:0007669"/>
    <property type="project" value="InterPro"/>
</dbReference>
<dbReference type="GO" id="GO:0004672">
    <property type="term" value="F:protein kinase activity"/>
    <property type="evidence" value="ECO:0000318"/>
    <property type="project" value="GO_Central"/>
</dbReference>
<dbReference type="CDD" id="cd06225">
    <property type="entry name" value="HAMP"/>
    <property type="match status" value="1"/>
</dbReference>
<dbReference type="CDD" id="cd16917">
    <property type="entry name" value="HATPase_UhpB-NarQ-NarX-like"/>
    <property type="match status" value="1"/>
</dbReference>
<dbReference type="Gene3D" id="1.20.5.1930">
    <property type="match status" value="1"/>
</dbReference>
<dbReference type="Gene3D" id="6.10.340.10">
    <property type="match status" value="1"/>
</dbReference>
<dbReference type="Gene3D" id="3.30.565.10">
    <property type="entry name" value="Histidine kinase-like ATPase, C-terminal domain"/>
    <property type="match status" value="1"/>
</dbReference>
<dbReference type="InterPro" id="IPR003660">
    <property type="entry name" value="HAMP_dom"/>
</dbReference>
<dbReference type="InterPro" id="IPR036890">
    <property type="entry name" value="HATPase_C_sf"/>
</dbReference>
<dbReference type="InterPro" id="IPR005467">
    <property type="entry name" value="His_kinase_dom"/>
</dbReference>
<dbReference type="InterPro" id="IPR017202">
    <property type="entry name" value="LiaS/VraS"/>
</dbReference>
<dbReference type="InterPro" id="IPR050482">
    <property type="entry name" value="Sensor_HK_TwoCompSys"/>
</dbReference>
<dbReference type="InterPro" id="IPR011712">
    <property type="entry name" value="Sig_transdc_His_kin_sub3_dim/P"/>
</dbReference>
<dbReference type="PANTHER" id="PTHR24421">
    <property type="entry name" value="NITRATE/NITRITE SENSOR PROTEIN NARX-RELATED"/>
    <property type="match status" value="1"/>
</dbReference>
<dbReference type="PANTHER" id="PTHR24421:SF37">
    <property type="entry name" value="SENSOR HISTIDINE KINASE NARS"/>
    <property type="match status" value="1"/>
</dbReference>
<dbReference type="Pfam" id="PF00672">
    <property type="entry name" value="HAMP"/>
    <property type="match status" value="1"/>
</dbReference>
<dbReference type="Pfam" id="PF02518">
    <property type="entry name" value="HATPase_c"/>
    <property type="match status" value="1"/>
</dbReference>
<dbReference type="Pfam" id="PF07730">
    <property type="entry name" value="HisKA_3"/>
    <property type="match status" value="1"/>
</dbReference>
<dbReference type="PIRSF" id="PIRSF037431">
    <property type="entry name" value="STHK_LiaS"/>
    <property type="match status" value="1"/>
</dbReference>
<dbReference type="SMART" id="SM00304">
    <property type="entry name" value="HAMP"/>
    <property type="match status" value="1"/>
</dbReference>
<dbReference type="SMART" id="SM00387">
    <property type="entry name" value="HATPase_c"/>
    <property type="match status" value="1"/>
</dbReference>
<dbReference type="SUPFAM" id="SSF55874">
    <property type="entry name" value="ATPase domain of HSP90 chaperone/DNA topoisomerase II/histidine kinase"/>
    <property type="match status" value="1"/>
</dbReference>
<dbReference type="PROSITE" id="PS50885">
    <property type="entry name" value="HAMP"/>
    <property type="match status" value="1"/>
</dbReference>
<dbReference type="PROSITE" id="PS50109">
    <property type="entry name" value="HIS_KIN"/>
    <property type="match status" value="1"/>
</dbReference>
<protein>
    <recommendedName>
        <fullName>Sensor histidine kinase LiaS</fullName>
        <ecNumber>2.7.13.3</ecNumber>
    </recommendedName>
</protein>
<reference key="1">
    <citation type="journal article" date="1998" name="Microbiology">
        <title>The yvsA-yvqA (293 degrees - 289 degrees) region of the Bacillus subtilis chromosome containing genes involved in metal ion uptake and a putative sigma factor.</title>
        <authorList>
            <person name="Wipat A."/>
            <person name="Brignell C.S."/>
            <person name="Guy J.B."/>
            <person name="Rose M."/>
            <person name="Emmerson P.T."/>
            <person name="Harwood C.R."/>
        </authorList>
    </citation>
    <scope>NUCLEOTIDE SEQUENCE [GENOMIC DNA]</scope>
    <source>
        <strain>168</strain>
    </source>
</reference>
<reference key="2">
    <citation type="journal article" date="1997" name="Nature">
        <title>The complete genome sequence of the Gram-positive bacterium Bacillus subtilis.</title>
        <authorList>
            <person name="Kunst F."/>
            <person name="Ogasawara N."/>
            <person name="Moszer I."/>
            <person name="Albertini A.M."/>
            <person name="Alloni G."/>
            <person name="Azevedo V."/>
            <person name="Bertero M.G."/>
            <person name="Bessieres P."/>
            <person name="Bolotin A."/>
            <person name="Borchert S."/>
            <person name="Borriss R."/>
            <person name="Boursier L."/>
            <person name="Brans A."/>
            <person name="Braun M."/>
            <person name="Brignell S.C."/>
            <person name="Bron S."/>
            <person name="Brouillet S."/>
            <person name="Bruschi C.V."/>
            <person name="Caldwell B."/>
            <person name="Capuano V."/>
            <person name="Carter N.M."/>
            <person name="Choi S.-K."/>
            <person name="Codani J.-J."/>
            <person name="Connerton I.F."/>
            <person name="Cummings N.J."/>
            <person name="Daniel R.A."/>
            <person name="Denizot F."/>
            <person name="Devine K.M."/>
            <person name="Duesterhoeft A."/>
            <person name="Ehrlich S.D."/>
            <person name="Emmerson P.T."/>
            <person name="Entian K.-D."/>
            <person name="Errington J."/>
            <person name="Fabret C."/>
            <person name="Ferrari E."/>
            <person name="Foulger D."/>
            <person name="Fritz C."/>
            <person name="Fujita M."/>
            <person name="Fujita Y."/>
            <person name="Fuma S."/>
            <person name="Galizzi A."/>
            <person name="Galleron N."/>
            <person name="Ghim S.-Y."/>
            <person name="Glaser P."/>
            <person name="Goffeau A."/>
            <person name="Golightly E.J."/>
            <person name="Grandi G."/>
            <person name="Guiseppi G."/>
            <person name="Guy B.J."/>
            <person name="Haga K."/>
            <person name="Haiech J."/>
            <person name="Harwood C.R."/>
            <person name="Henaut A."/>
            <person name="Hilbert H."/>
            <person name="Holsappel S."/>
            <person name="Hosono S."/>
            <person name="Hullo M.-F."/>
            <person name="Itaya M."/>
            <person name="Jones L.-M."/>
            <person name="Joris B."/>
            <person name="Karamata D."/>
            <person name="Kasahara Y."/>
            <person name="Klaerr-Blanchard M."/>
            <person name="Klein C."/>
            <person name="Kobayashi Y."/>
            <person name="Koetter P."/>
            <person name="Koningstein G."/>
            <person name="Krogh S."/>
            <person name="Kumano M."/>
            <person name="Kurita K."/>
            <person name="Lapidus A."/>
            <person name="Lardinois S."/>
            <person name="Lauber J."/>
            <person name="Lazarevic V."/>
            <person name="Lee S.-M."/>
            <person name="Levine A."/>
            <person name="Liu H."/>
            <person name="Masuda S."/>
            <person name="Mauel C."/>
            <person name="Medigue C."/>
            <person name="Medina N."/>
            <person name="Mellado R.P."/>
            <person name="Mizuno M."/>
            <person name="Moestl D."/>
            <person name="Nakai S."/>
            <person name="Noback M."/>
            <person name="Noone D."/>
            <person name="O'Reilly M."/>
            <person name="Ogawa K."/>
            <person name="Ogiwara A."/>
            <person name="Oudega B."/>
            <person name="Park S.-H."/>
            <person name="Parro V."/>
            <person name="Pohl T.M."/>
            <person name="Portetelle D."/>
            <person name="Porwollik S."/>
            <person name="Prescott A.M."/>
            <person name="Presecan E."/>
            <person name="Pujic P."/>
            <person name="Purnelle B."/>
            <person name="Rapoport G."/>
            <person name="Rey M."/>
            <person name="Reynolds S."/>
            <person name="Rieger M."/>
            <person name="Rivolta C."/>
            <person name="Rocha E."/>
            <person name="Roche B."/>
            <person name="Rose M."/>
            <person name="Sadaie Y."/>
            <person name="Sato T."/>
            <person name="Scanlan E."/>
            <person name="Schleich S."/>
            <person name="Schroeter R."/>
            <person name="Scoffone F."/>
            <person name="Sekiguchi J."/>
            <person name="Sekowska A."/>
            <person name="Seror S.J."/>
            <person name="Serror P."/>
            <person name="Shin B.-S."/>
            <person name="Soldo B."/>
            <person name="Sorokin A."/>
            <person name="Tacconi E."/>
            <person name="Takagi T."/>
            <person name="Takahashi H."/>
            <person name="Takemaru K."/>
            <person name="Takeuchi M."/>
            <person name="Tamakoshi A."/>
            <person name="Tanaka T."/>
            <person name="Terpstra P."/>
            <person name="Tognoni A."/>
            <person name="Tosato V."/>
            <person name="Uchiyama S."/>
            <person name="Vandenbol M."/>
            <person name="Vannier F."/>
            <person name="Vassarotti A."/>
            <person name="Viari A."/>
            <person name="Wambutt R."/>
            <person name="Wedler E."/>
            <person name="Wedler H."/>
            <person name="Weitzenegger T."/>
            <person name="Winters P."/>
            <person name="Wipat A."/>
            <person name="Yamamoto H."/>
            <person name="Yamane K."/>
            <person name="Yasumoto K."/>
            <person name="Yata K."/>
            <person name="Yoshida K."/>
            <person name="Yoshikawa H.-F."/>
            <person name="Zumstein E."/>
            <person name="Yoshikawa H."/>
            <person name="Danchin A."/>
        </authorList>
    </citation>
    <scope>NUCLEOTIDE SEQUENCE [LARGE SCALE GENOMIC DNA]</scope>
    <source>
        <strain>168</strain>
    </source>
</reference>
<reference key="3">
    <citation type="journal article" date="2001" name="J. Bacteriol.">
        <title>Comprehensive DNA microarray analysis of Bacillus subtilis two-component regulatory systems.</title>
        <authorList>
            <person name="Kobayashi K."/>
            <person name="Ogura M."/>
            <person name="Yamaguchi H."/>
            <person name="Yoshida K."/>
            <person name="Ogasawara N."/>
            <person name="Tanaka T."/>
            <person name="Fujita Y."/>
        </authorList>
    </citation>
    <scope>FUNCTION</scope>
</reference>
<reference key="4">
    <citation type="journal article" date="2003" name="Mol. Microbiol.">
        <title>Cell wall stress responses in Bacillus subtilis: the regulatory network of the bacitracin stimulon.</title>
        <authorList>
            <person name="Mascher T."/>
            <person name="Margulis N.G."/>
            <person name="Wang T."/>
            <person name="Ye R.W."/>
            <person name="Helmann J.D."/>
        </authorList>
    </citation>
    <scope>INDUCTION BY BACITRACIN</scope>
    <source>
        <strain>168 / CU1065</strain>
    </source>
</reference>
<reference key="5">
    <citation type="journal article" date="2004" name="Antimicrob. Agents Chemother.">
        <title>Antibiotic-inducible promoter regulated by the cell envelope stress-sensing two-component system LiaRS of Bacillus subtilis.</title>
        <authorList>
            <person name="Mascher T."/>
            <person name="Zimmer S.L."/>
            <person name="Smith T.-A."/>
            <person name="Helmann J.D."/>
        </authorList>
    </citation>
    <scope>INDUCTION BY ANTIBIOTICS</scope>
</reference>
<reference key="6">
    <citation type="journal article" date="2005" name="Appl. Microbiol. Biotechnol.">
        <title>Transcriptome analysis of the secretion stress response of Bacillus subtilis.</title>
        <authorList>
            <person name="Hyyrylaeinen H.-L."/>
            <person name="Sarvas M."/>
            <person name="Kontinen V.P."/>
        </authorList>
    </citation>
    <scope>INDUCTION BY STRESS</scope>
</reference>
<reference key="7">
    <citation type="journal article" date="2005" name="Microbiology">
        <title>Cationic antimicrobial peptides elicit a complex stress response in Bacillus subtilis that involves ECF-type sigma factors and two-component signal transduction systems.</title>
        <authorList>
            <person name="Pietiaeinen M."/>
            <person name="Gardemeister M."/>
            <person name="Mecklin M."/>
            <person name="Leskelae S."/>
            <person name="Sarvas M."/>
            <person name="Kontinen V.P."/>
        </authorList>
    </citation>
    <scope>INDUCTION BY LL-37; PG-1 AND TRITON X-100</scope>
    <source>
        <strain>168</strain>
    </source>
</reference>
<sequence>MRKKMLASLQWRAIRMTTGISLLLFVCLISFMMFYYRLDPLVLLSSSWFGIPFILILLLISVTVGFASGYMYGNRLKTRIDTLIESILTFENGNFAYRIPPLGDDEIGLAADQLNEMAKRVELQVASLQKLSNERAEWQAQMKKSVISEERQRLARDLHDAVSQQLFAISMMTSAVLEHVKDADDKTVKRIRMVEHMAGEAQNEMRALLLHLRPVTLEGKGLKEGLTELLDEFRKKQPIDIEWDIQDTAISKGVEDHLFRIVQEALSNVFRHSKASKVTVILGIKNSQLRLKVIDNGKGFKMDQVKASSYGLNSMKERASEIGGVAEVISVEGKGTQIEVKVPIFPEEKGENERDSSIID</sequence>
<evidence type="ECO:0000255" key="1"/>
<evidence type="ECO:0000255" key="2">
    <source>
        <dbReference type="PROSITE-ProRule" id="PRU00102"/>
    </source>
</evidence>
<evidence type="ECO:0000255" key="3">
    <source>
        <dbReference type="PROSITE-ProRule" id="PRU00107"/>
    </source>
</evidence>
<evidence type="ECO:0000269" key="4">
    <source>
    </source>
</evidence>
<evidence type="ECO:0000269" key="5">
    <source>
    </source>
</evidence>
<evidence type="ECO:0000269" key="6">
    <source>
    </source>
</evidence>
<evidence type="ECO:0000269" key="7">
    <source>
    </source>
</evidence>
<evidence type="ECO:0000269" key="8">
    <source>
    </source>
</evidence>
<evidence type="ECO:0000305" key="9"/>
<gene>
    <name type="primary">liaS</name>
    <name type="synonym">yvqE</name>
    <name type="ordered locus">BSU33090</name>
</gene>
<accession>O32198</accession>
<accession>Q7B2J4</accession>
<feature type="chain" id="PRO_0000074780" description="Sensor histidine kinase LiaS">
    <location>
        <begin position="1"/>
        <end position="360"/>
    </location>
</feature>
<feature type="topological domain" description="Cytoplasmic" evidence="1">
    <location>
        <begin position="1"/>
        <end position="15"/>
    </location>
</feature>
<feature type="transmembrane region" description="Helical" evidence="1">
    <location>
        <begin position="16"/>
        <end position="36"/>
    </location>
</feature>
<feature type="topological domain" description="Extracellular" evidence="1">
    <location>
        <begin position="37"/>
        <end position="47"/>
    </location>
</feature>
<feature type="transmembrane region" description="Helical" evidence="1">
    <location>
        <begin position="48"/>
        <end position="68"/>
    </location>
</feature>
<feature type="topological domain" description="Cytoplasmic" evidence="1">
    <location>
        <begin position="69"/>
        <end position="360"/>
    </location>
</feature>
<feature type="domain" description="HAMP" evidence="2">
    <location>
        <begin position="74"/>
        <end position="126"/>
    </location>
</feature>
<feature type="domain" description="Histidine kinase" evidence="3">
    <location>
        <begin position="153"/>
        <end position="346"/>
    </location>
</feature>
<feature type="modified residue" description="Phosphohistidine; by autocatalysis" evidence="3">
    <location>
        <position position="159"/>
    </location>
</feature>